<feature type="chain" id="PRO_1000001013" description="Dihydroxy-acid dehydratase">
    <location>
        <begin position="1"/>
        <end position="550"/>
    </location>
</feature>
<feature type="active site" description="Proton acceptor" evidence="1">
    <location>
        <position position="466"/>
    </location>
</feature>
<feature type="binding site" evidence="1">
    <location>
        <position position="78"/>
    </location>
    <ligand>
        <name>Mg(2+)</name>
        <dbReference type="ChEBI" id="CHEBI:18420"/>
    </ligand>
</feature>
<feature type="binding site" evidence="1">
    <location>
        <position position="119"/>
    </location>
    <ligand>
        <name>[2Fe-2S] cluster</name>
        <dbReference type="ChEBI" id="CHEBI:190135"/>
    </ligand>
</feature>
<feature type="binding site" evidence="1">
    <location>
        <position position="120"/>
    </location>
    <ligand>
        <name>Mg(2+)</name>
        <dbReference type="ChEBI" id="CHEBI:18420"/>
    </ligand>
</feature>
<feature type="binding site" description="via carbamate group" evidence="1">
    <location>
        <position position="121"/>
    </location>
    <ligand>
        <name>Mg(2+)</name>
        <dbReference type="ChEBI" id="CHEBI:18420"/>
    </ligand>
</feature>
<feature type="binding site" evidence="1">
    <location>
        <position position="191"/>
    </location>
    <ligand>
        <name>[2Fe-2S] cluster</name>
        <dbReference type="ChEBI" id="CHEBI:190135"/>
    </ligand>
</feature>
<feature type="binding site" evidence="1">
    <location>
        <position position="440"/>
    </location>
    <ligand>
        <name>Mg(2+)</name>
        <dbReference type="ChEBI" id="CHEBI:18420"/>
    </ligand>
</feature>
<feature type="modified residue" description="N6-carboxylysine" evidence="1">
    <location>
        <position position="121"/>
    </location>
</feature>
<sequence>MISDNIKKGVIRSPNRALLKACGYTDEDMEKPFIGVVNSFTDVVPGHIHLRTLAEAVKNGVYANGGTPFEFNTIGICDGIAMGHEGMKYSLPSREIIADAVESMARAHGFDGLVLIPTCDKIVPGMIMGALRLNIPFIVVTGGPMLPGEFQGKKYELISLFEGVGQYQVGKISEEELKCIEDCACSGAGSCAGLYTANSMACLTEALGLSLPMCATTHAVDAQKVRIAKKSGSKIVDLVKQDIKPKDILTKEAFENAILVDLALGGSTNTTLHIPAIANEIENKFITLDDFDRLSDEVPHIASIKPGGEHFMIDLHNAGGIPAVFNVLKEKIRDTNTVSGKTTLEIAKEVKYINYDVIRKTEAPVHETAGLRVLKGNIAPNGCVVKIGAVNPKMYKHEGPAKVFNSEDDAISAILGGKIVSGDVIVIRYEGPSGGPGMREMLSPTSAICGMGLDDSVALITDGRFSGGSRGPCIGHISPEAMAGGLIAVINDGDTIKIDMIGKKINVELNNSEIENRLKSLKIPEPKVKTGYLSRYSRLVSSADEGAVLK</sequence>
<reference key="1">
    <citation type="submission" date="2007-06" db="EMBL/GenBank/DDBJ databases">
        <title>Complete sequence of Methanococcus vannielii SB.</title>
        <authorList>
            <consortium name="US DOE Joint Genome Institute"/>
            <person name="Copeland A."/>
            <person name="Lucas S."/>
            <person name="Lapidus A."/>
            <person name="Barry K."/>
            <person name="Glavina del Rio T."/>
            <person name="Dalin E."/>
            <person name="Tice H."/>
            <person name="Pitluck S."/>
            <person name="Chain P."/>
            <person name="Malfatti S."/>
            <person name="Shin M."/>
            <person name="Vergez L."/>
            <person name="Schmutz J."/>
            <person name="Larimer F."/>
            <person name="Land M."/>
            <person name="Hauser L."/>
            <person name="Kyrpides N."/>
            <person name="Anderson I."/>
            <person name="Sieprawska-Lupa M."/>
            <person name="Whitman W.B."/>
            <person name="Richardson P."/>
        </authorList>
    </citation>
    <scope>NUCLEOTIDE SEQUENCE [LARGE SCALE GENOMIC DNA]</scope>
    <source>
        <strain>ATCC 35089 / DSM 1224 / JCM 13029 / OCM 148 / SB</strain>
    </source>
</reference>
<name>ILVD_METVS</name>
<evidence type="ECO:0000255" key="1">
    <source>
        <dbReference type="HAMAP-Rule" id="MF_00012"/>
    </source>
</evidence>
<comment type="function">
    <text evidence="1">Functions in the biosynthesis of branched-chain amino acids. Catalyzes the dehydration of (2R,3R)-2,3-dihydroxy-3-methylpentanoate (2,3-dihydroxy-3-methylvalerate) into 2-oxo-3-methylpentanoate (2-oxo-3-methylvalerate) and of (2R)-2,3-dihydroxy-3-methylbutanoate (2,3-dihydroxyisovalerate) into 2-oxo-3-methylbutanoate (2-oxoisovalerate), the penultimate precursor to L-isoleucine and L-valine, respectively.</text>
</comment>
<comment type="catalytic activity">
    <reaction evidence="1">
        <text>(2R)-2,3-dihydroxy-3-methylbutanoate = 3-methyl-2-oxobutanoate + H2O</text>
        <dbReference type="Rhea" id="RHEA:24809"/>
        <dbReference type="ChEBI" id="CHEBI:11851"/>
        <dbReference type="ChEBI" id="CHEBI:15377"/>
        <dbReference type="ChEBI" id="CHEBI:49072"/>
        <dbReference type="EC" id="4.2.1.9"/>
    </reaction>
    <physiologicalReaction direction="left-to-right" evidence="1">
        <dbReference type="Rhea" id="RHEA:24810"/>
    </physiologicalReaction>
</comment>
<comment type="catalytic activity">
    <reaction evidence="1">
        <text>(2R,3R)-2,3-dihydroxy-3-methylpentanoate = (S)-3-methyl-2-oxopentanoate + H2O</text>
        <dbReference type="Rhea" id="RHEA:27694"/>
        <dbReference type="ChEBI" id="CHEBI:15377"/>
        <dbReference type="ChEBI" id="CHEBI:35146"/>
        <dbReference type="ChEBI" id="CHEBI:49258"/>
        <dbReference type="EC" id="4.2.1.9"/>
    </reaction>
    <physiologicalReaction direction="left-to-right" evidence="1">
        <dbReference type="Rhea" id="RHEA:27695"/>
    </physiologicalReaction>
</comment>
<comment type="cofactor">
    <cofactor evidence="1">
        <name>[2Fe-2S] cluster</name>
        <dbReference type="ChEBI" id="CHEBI:190135"/>
    </cofactor>
    <text evidence="1">Binds 1 [2Fe-2S] cluster per subunit. This cluster acts as a Lewis acid cofactor.</text>
</comment>
<comment type="cofactor">
    <cofactor evidence="1">
        <name>Mg(2+)</name>
        <dbReference type="ChEBI" id="CHEBI:18420"/>
    </cofactor>
</comment>
<comment type="pathway">
    <text evidence="1">Amino-acid biosynthesis; L-isoleucine biosynthesis; L-isoleucine from 2-oxobutanoate: step 3/4.</text>
</comment>
<comment type="pathway">
    <text evidence="1">Amino-acid biosynthesis; L-valine biosynthesis; L-valine from pyruvate: step 3/4.</text>
</comment>
<comment type="subunit">
    <text evidence="1">Homodimer.</text>
</comment>
<comment type="similarity">
    <text evidence="1">Belongs to the IlvD/Edd family.</text>
</comment>
<accession>A6URV4</accession>
<organism>
    <name type="scientific">Methanococcus vannielii (strain ATCC 35089 / DSM 1224 / JCM 13029 / OCM 148 / SB)</name>
    <dbReference type="NCBI Taxonomy" id="406327"/>
    <lineage>
        <taxon>Archaea</taxon>
        <taxon>Methanobacteriati</taxon>
        <taxon>Methanobacteriota</taxon>
        <taxon>Methanomada group</taxon>
        <taxon>Methanococci</taxon>
        <taxon>Methanococcales</taxon>
        <taxon>Methanococcaceae</taxon>
        <taxon>Methanococcus</taxon>
    </lineage>
</organism>
<protein>
    <recommendedName>
        <fullName evidence="1">Dihydroxy-acid dehydratase</fullName>
        <shortName evidence="1">DAD</shortName>
        <ecNumber evidence="1">4.2.1.9</ecNumber>
    </recommendedName>
</protein>
<proteinExistence type="inferred from homology"/>
<keyword id="KW-0001">2Fe-2S</keyword>
<keyword id="KW-0028">Amino-acid biosynthesis</keyword>
<keyword id="KW-0100">Branched-chain amino acid biosynthesis</keyword>
<keyword id="KW-0408">Iron</keyword>
<keyword id="KW-0411">Iron-sulfur</keyword>
<keyword id="KW-0456">Lyase</keyword>
<keyword id="KW-0460">Magnesium</keyword>
<keyword id="KW-0479">Metal-binding</keyword>
<dbReference type="EC" id="4.2.1.9" evidence="1"/>
<dbReference type="EMBL" id="CP000742">
    <property type="protein sequence ID" value="ABR55226.1"/>
    <property type="molecule type" value="Genomic_DNA"/>
</dbReference>
<dbReference type="RefSeq" id="WP_012066141.1">
    <property type="nucleotide sequence ID" value="NC_009634.1"/>
</dbReference>
<dbReference type="SMR" id="A6URV4"/>
<dbReference type="STRING" id="406327.Mevan_1329"/>
<dbReference type="GeneID" id="5325163"/>
<dbReference type="KEGG" id="mvn:Mevan_1329"/>
<dbReference type="eggNOG" id="arCOG04045">
    <property type="taxonomic scope" value="Archaea"/>
</dbReference>
<dbReference type="HOGENOM" id="CLU_014271_4_2_2"/>
<dbReference type="OrthoDB" id="8674at2157"/>
<dbReference type="UniPathway" id="UPA00047">
    <property type="reaction ID" value="UER00057"/>
</dbReference>
<dbReference type="UniPathway" id="UPA00049">
    <property type="reaction ID" value="UER00061"/>
</dbReference>
<dbReference type="Proteomes" id="UP000001107">
    <property type="component" value="Chromosome"/>
</dbReference>
<dbReference type="GO" id="GO:0005829">
    <property type="term" value="C:cytosol"/>
    <property type="evidence" value="ECO:0007669"/>
    <property type="project" value="TreeGrafter"/>
</dbReference>
<dbReference type="GO" id="GO:0051537">
    <property type="term" value="F:2 iron, 2 sulfur cluster binding"/>
    <property type="evidence" value="ECO:0007669"/>
    <property type="project" value="UniProtKB-UniRule"/>
</dbReference>
<dbReference type="GO" id="GO:0004160">
    <property type="term" value="F:dihydroxy-acid dehydratase activity"/>
    <property type="evidence" value="ECO:0007669"/>
    <property type="project" value="UniProtKB-UniRule"/>
</dbReference>
<dbReference type="GO" id="GO:0000287">
    <property type="term" value="F:magnesium ion binding"/>
    <property type="evidence" value="ECO:0007669"/>
    <property type="project" value="UniProtKB-UniRule"/>
</dbReference>
<dbReference type="GO" id="GO:0009097">
    <property type="term" value="P:isoleucine biosynthetic process"/>
    <property type="evidence" value="ECO:0007669"/>
    <property type="project" value="UniProtKB-UniRule"/>
</dbReference>
<dbReference type="GO" id="GO:0009099">
    <property type="term" value="P:L-valine biosynthetic process"/>
    <property type="evidence" value="ECO:0007669"/>
    <property type="project" value="UniProtKB-UniRule"/>
</dbReference>
<dbReference type="FunFam" id="3.50.30.80:FF:000001">
    <property type="entry name" value="Dihydroxy-acid dehydratase"/>
    <property type="match status" value="1"/>
</dbReference>
<dbReference type="Gene3D" id="3.50.30.80">
    <property type="entry name" value="IlvD/EDD C-terminal domain-like"/>
    <property type="match status" value="1"/>
</dbReference>
<dbReference type="HAMAP" id="MF_00012">
    <property type="entry name" value="IlvD"/>
    <property type="match status" value="1"/>
</dbReference>
<dbReference type="InterPro" id="IPR042096">
    <property type="entry name" value="Dihydro-acid_dehy_C"/>
</dbReference>
<dbReference type="InterPro" id="IPR004404">
    <property type="entry name" value="DihydroxyA_deHydtase"/>
</dbReference>
<dbReference type="InterPro" id="IPR020558">
    <property type="entry name" value="DiOHA_6PGluconate_deHydtase_CS"/>
</dbReference>
<dbReference type="InterPro" id="IPR056740">
    <property type="entry name" value="ILV_EDD_C"/>
</dbReference>
<dbReference type="InterPro" id="IPR000581">
    <property type="entry name" value="ILV_EDD_N"/>
</dbReference>
<dbReference type="InterPro" id="IPR037237">
    <property type="entry name" value="IlvD/EDD_N"/>
</dbReference>
<dbReference type="NCBIfam" id="TIGR00110">
    <property type="entry name" value="ilvD"/>
    <property type="match status" value="1"/>
</dbReference>
<dbReference type="NCBIfam" id="NF002068">
    <property type="entry name" value="PRK00911.1"/>
    <property type="match status" value="1"/>
</dbReference>
<dbReference type="PANTHER" id="PTHR43661">
    <property type="entry name" value="D-XYLONATE DEHYDRATASE"/>
    <property type="match status" value="1"/>
</dbReference>
<dbReference type="PANTHER" id="PTHR43661:SF3">
    <property type="entry name" value="D-XYLONATE DEHYDRATASE YAGF-RELATED"/>
    <property type="match status" value="1"/>
</dbReference>
<dbReference type="Pfam" id="PF24877">
    <property type="entry name" value="ILV_EDD_C"/>
    <property type="match status" value="1"/>
</dbReference>
<dbReference type="Pfam" id="PF00920">
    <property type="entry name" value="ILVD_EDD_N"/>
    <property type="match status" value="1"/>
</dbReference>
<dbReference type="SUPFAM" id="SSF143975">
    <property type="entry name" value="IlvD/EDD N-terminal domain-like"/>
    <property type="match status" value="1"/>
</dbReference>
<dbReference type="SUPFAM" id="SSF52016">
    <property type="entry name" value="LeuD/IlvD-like"/>
    <property type="match status" value="1"/>
</dbReference>
<dbReference type="PROSITE" id="PS00886">
    <property type="entry name" value="ILVD_EDD_1"/>
    <property type="match status" value="1"/>
</dbReference>
<dbReference type="PROSITE" id="PS00887">
    <property type="entry name" value="ILVD_EDD_2"/>
    <property type="match status" value="1"/>
</dbReference>
<gene>
    <name evidence="1" type="primary">ilvD</name>
    <name type="ordered locus">Mevan_1329</name>
</gene>